<gene>
    <name evidence="1" type="primary">moaC</name>
    <name type="ordered locus">BAV0826</name>
</gene>
<dbReference type="EC" id="4.6.1.17" evidence="1"/>
<dbReference type="EMBL" id="AM167904">
    <property type="protein sequence ID" value="CAJ48437.1"/>
    <property type="molecule type" value="Genomic_DNA"/>
</dbReference>
<dbReference type="RefSeq" id="WP_012416518.1">
    <property type="nucleotide sequence ID" value="NC_010645.1"/>
</dbReference>
<dbReference type="SMR" id="Q2KWG1"/>
<dbReference type="STRING" id="360910.BAV0826"/>
<dbReference type="KEGG" id="bav:BAV0826"/>
<dbReference type="eggNOG" id="COG0315">
    <property type="taxonomic scope" value="Bacteria"/>
</dbReference>
<dbReference type="HOGENOM" id="CLU_074693_1_1_4"/>
<dbReference type="OrthoDB" id="9794429at2"/>
<dbReference type="UniPathway" id="UPA00344"/>
<dbReference type="Proteomes" id="UP000001977">
    <property type="component" value="Chromosome"/>
</dbReference>
<dbReference type="GO" id="GO:0061799">
    <property type="term" value="F:cyclic pyranopterin monophosphate synthase activity"/>
    <property type="evidence" value="ECO:0007669"/>
    <property type="project" value="UniProtKB-UniRule"/>
</dbReference>
<dbReference type="GO" id="GO:0006777">
    <property type="term" value="P:Mo-molybdopterin cofactor biosynthetic process"/>
    <property type="evidence" value="ECO:0007669"/>
    <property type="project" value="UniProtKB-UniRule"/>
</dbReference>
<dbReference type="CDD" id="cd01420">
    <property type="entry name" value="MoaC_PE"/>
    <property type="match status" value="1"/>
</dbReference>
<dbReference type="Gene3D" id="3.30.70.640">
    <property type="entry name" value="Molybdopterin cofactor biosynthesis C (MoaC) domain"/>
    <property type="match status" value="1"/>
</dbReference>
<dbReference type="HAMAP" id="MF_01224_B">
    <property type="entry name" value="MoaC_B"/>
    <property type="match status" value="1"/>
</dbReference>
<dbReference type="InterPro" id="IPR023045">
    <property type="entry name" value="MoaC"/>
</dbReference>
<dbReference type="InterPro" id="IPR047594">
    <property type="entry name" value="MoaC_bact/euk"/>
</dbReference>
<dbReference type="InterPro" id="IPR036522">
    <property type="entry name" value="MoaC_sf"/>
</dbReference>
<dbReference type="InterPro" id="IPR050105">
    <property type="entry name" value="MoCo_biosynth_MoaA/MoaC"/>
</dbReference>
<dbReference type="InterPro" id="IPR002820">
    <property type="entry name" value="Mopterin_CF_biosynth-C_dom"/>
</dbReference>
<dbReference type="NCBIfam" id="TIGR00581">
    <property type="entry name" value="moaC"/>
    <property type="match status" value="1"/>
</dbReference>
<dbReference type="NCBIfam" id="NF006870">
    <property type="entry name" value="PRK09364.1"/>
    <property type="match status" value="1"/>
</dbReference>
<dbReference type="PANTHER" id="PTHR22960:SF29">
    <property type="entry name" value="CYCLIC PYRANOPTERIN MONOPHOSPHATE SYNTHASE"/>
    <property type="match status" value="1"/>
</dbReference>
<dbReference type="PANTHER" id="PTHR22960">
    <property type="entry name" value="MOLYBDOPTERIN COFACTOR SYNTHESIS PROTEIN A"/>
    <property type="match status" value="1"/>
</dbReference>
<dbReference type="Pfam" id="PF01967">
    <property type="entry name" value="MoaC"/>
    <property type="match status" value="1"/>
</dbReference>
<dbReference type="SUPFAM" id="SSF55040">
    <property type="entry name" value="Molybdenum cofactor biosynthesis protein C, MoaC"/>
    <property type="match status" value="1"/>
</dbReference>
<feature type="chain" id="PRO_1000073153" description="Cyclic pyranopterin monophosphate synthase">
    <location>
        <begin position="1"/>
        <end position="162"/>
    </location>
</feature>
<feature type="active site" evidence="1">
    <location>
        <position position="132"/>
    </location>
</feature>
<feature type="binding site" evidence="1">
    <location>
        <begin position="79"/>
        <end position="81"/>
    </location>
    <ligand>
        <name>substrate</name>
    </ligand>
</feature>
<feature type="binding site" evidence="1">
    <location>
        <begin position="117"/>
        <end position="118"/>
    </location>
    <ligand>
        <name>substrate</name>
    </ligand>
</feature>
<evidence type="ECO:0000255" key="1">
    <source>
        <dbReference type="HAMAP-Rule" id="MF_01224"/>
    </source>
</evidence>
<proteinExistence type="inferred from homology"/>
<comment type="function">
    <text evidence="1">Catalyzes the conversion of (8S)-3',8-cyclo-7,8-dihydroguanosine 5'-triphosphate to cyclic pyranopterin monophosphate (cPMP).</text>
</comment>
<comment type="catalytic activity">
    <reaction evidence="1">
        <text>(8S)-3',8-cyclo-7,8-dihydroguanosine 5'-triphosphate = cyclic pyranopterin phosphate + diphosphate</text>
        <dbReference type="Rhea" id="RHEA:49580"/>
        <dbReference type="ChEBI" id="CHEBI:33019"/>
        <dbReference type="ChEBI" id="CHEBI:59648"/>
        <dbReference type="ChEBI" id="CHEBI:131766"/>
        <dbReference type="EC" id="4.6.1.17"/>
    </reaction>
</comment>
<comment type="pathway">
    <text evidence="1">Cofactor biosynthesis; molybdopterin biosynthesis.</text>
</comment>
<comment type="subunit">
    <text evidence="1">Homohexamer; trimer of dimers.</text>
</comment>
<comment type="similarity">
    <text evidence="1">Belongs to the MoaC family.</text>
</comment>
<name>MOAC_BORA1</name>
<sequence length="162" mass="17444">MSDSLPTLSHLDDSGQVRMVDVGDKADADRLAIARAAVRMSPQAYGLLTQPGQGKGEVLNTARVAGVLAAKRCAELIPLCHSLPLAFVGIEFSLDDEGHRVEIRATCRTRYKTGVEMEAMTACSMAALTIYDMCKAADKGIVIEQVRLAYKSGGKSGEWRND</sequence>
<keyword id="KW-0456">Lyase</keyword>
<keyword id="KW-0501">Molybdenum cofactor biosynthesis</keyword>
<keyword id="KW-1185">Reference proteome</keyword>
<accession>Q2KWG1</accession>
<reference key="1">
    <citation type="journal article" date="2006" name="J. Bacteriol.">
        <title>Comparison of the genome sequence of the poultry pathogen Bordetella avium with those of B. bronchiseptica, B. pertussis, and B. parapertussis reveals extensive diversity in surface structures associated with host interaction.</title>
        <authorList>
            <person name="Sebaihia M."/>
            <person name="Preston A."/>
            <person name="Maskell D.J."/>
            <person name="Kuzmiak H."/>
            <person name="Connell T.D."/>
            <person name="King N.D."/>
            <person name="Orndorff P.E."/>
            <person name="Miyamoto D.M."/>
            <person name="Thomson N.R."/>
            <person name="Harris D."/>
            <person name="Goble A."/>
            <person name="Lord A."/>
            <person name="Murphy L."/>
            <person name="Quail M.A."/>
            <person name="Rutter S."/>
            <person name="Squares R."/>
            <person name="Squares S."/>
            <person name="Woodward J."/>
            <person name="Parkhill J."/>
            <person name="Temple L.M."/>
        </authorList>
    </citation>
    <scope>NUCLEOTIDE SEQUENCE [LARGE SCALE GENOMIC DNA]</scope>
    <source>
        <strain>197N</strain>
    </source>
</reference>
<protein>
    <recommendedName>
        <fullName evidence="1">Cyclic pyranopterin monophosphate synthase</fullName>
        <ecNumber evidence="1">4.6.1.17</ecNumber>
    </recommendedName>
    <alternativeName>
        <fullName evidence="1">Molybdenum cofactor biosynthesis protein C</fullName>
    </alternativeName>
</protein>
<organism>
    <name type="scientific">Bordetella avium (strain 197N)</name>
    <dbReference type="NCBI Taxonomy" id="360910"/>
    <lineage>
        <taxon>Bacteria</taxon>
        <taxon>Pseudomonadati</taxon>
        <taxon>Pseudomonadota</taxon>
        <taxon>Betaproteobacteria</taxon>
        <taxon>Burkholderiales</taxon>
        <taxon>Alcaligenaceae</taxon>
        <taxon>Bordetella</taxon>
    </lineage>
</organism>